<keyword id="KW-0044">Antibiotic</keyword>
<keyword id="KW-0929">Antimicrobial</keyword>
<keyword id="KW-0165">Cleavage on pair of basic residues</keyword>
<keyword id="KW-0211">Defensin</keyword>
<keyword id="KW-0903">Direct protein sequencing</keyword>
<keyword id="KW-1015">Disulfide bond</keyword>
<keyword id="KW-0295">Fungicide</keyword>
<keyword id="KW-0391">Immunity</keyword>
<keyword id="KW-0399">Innate immunity</keyword>
<keyword id="KW-0964">Secreted</keyword>
<keyword id="KW-0732">Signal</keyword>
<organism>
    <name type="scientific">Phlebotomus duboscqi</name>
    <name type="common">Sandfly</name>
    <dbReference type="NCBI Taxonomy" id="37738"/>
    <lineage>
        <taxon>Eukaryota</taxon>
        <taxon>Metazoa</taxon>
        <taxon>Ecdysozoa</taxon>
        <taxon>Arthropoda</taxon>
        <taxon>Hexapoda</taxon>
        <taxon>Insecta</taxon>
        <taxon>Pterygota</taxon>
        <taxon>Neoptera</taxon>
        <taxon>Endopterygota</taxon>
        <taxon>Diptera</taxon>
        <taxon>Nematocera</taxon>
        <taxon>Psychodoidea</taxon>
        <taxon>Psychodidae</taxon>
        <taxon>Phlebotomus</taxon>
        <taxon>Phlebotomus</taxon>
    </lineage>
</organism>
<proteinExistence type="evidence at protein level"/>
<feature type="signal peptide" evidence="1">
    <location>
        <begin position="1"/>
        <end position="19"/>
    </location>
</feature>
<feature type="propeptide" id="PRO_0000006746" evidence="3">
    <location>
        <begin position="20"/>
        <end position="58"/>
    </location>
</feature>
<feature type="chain" id="PRO_0000006747" description="Defensin">
    <location>
        <begin position="59"/>
        <end position="98"/>
    </location>
</feature>
<feature type="disulfide bond" evidence="2">
    <location>
        <begin position="61"/>
        <end position="88"/>
    </location>
</feature>
<feature type="disulfide bond" evidence="2">
    <location>
        <begin position="74"/>
        <end position="94"/>
    </location>
</feature>
<feature type="disulfide bond" evidence="2">
    <location>
        <begin position="78"/>
        <end position="96"/>
    </location>
</feature>
<sequence length="98" mass="10743">MRTFLVTFVLVVVVGVISAYPSNPVEVEAEDFDAQDPDLQTFQDTFYEVPQVHSRQKRATCDLLSAFGVGHAACAAHCIGHGYRGGYCNSKAVCTCRR</sequence>
<name>DEFI_PHLDU</name>
<dbReference type="SMR" id="P83404"/>
<dbReference type="GO" id="GO:0005576">
    <property type="term" value="C:extracellular region"/>
    <property type="evidence" value="ECO:0000314"/>
    <property type="project" value="UniProtKB"/>
</dbReference>
<dbReference type="GO" id="GO:0005615">
    <property type="term" value="C:extracellular space"/>
    <property type="evidence" value="ECO:0007669"/>
    <property type="project" value="TreeGrafter"/>
</dbReference>
<dbReference type="GO" id="GO:0050832">
    <property type="term" value="P:defense response to fungus"/>
    <property type="evidence" value="ECO:0000314"/>
    <property type="project" value="UniProtKB"/>
</dbReference>
<dbReference type="GO" id="GO:0050830">
    <property type="term" value="P:defense response to Gram-positive bacterium"/>
    <property type="evidence" value="ECO:0000314"/>
    <property type="project" value="UniProtKB"/>
</dbReference>
<dbReference type="GO" id="GO:0006959">
    <property type="term" value="P:humoral immune response"/>
    <property type="evidence" value="ECO:0007669"/>
    <property type="project" value="TreeGrafter"/>
</dbReference>
<dbReference type="GO" id="GO:0045087">
    <property type="term" value="P:innate immune response"/>
    <property type="evidence" value="ECO:0007669"/>
    <property type="project" value="UniProtKB-KW"/>
</dbReference>
<dbReference type="GO" id="GO:0031640">
    <property type="term" value="P:killing of cells of another organism"/>
    <property type="evidence" value="ECO:0007669"/>
    <property type="project" value="UniProtKB-KW"/>
</dbReference>
<dbReference type="CDD" id="cd21806">
    <property type="entry name" value="DEFL_defensin-like"/>
    <property type="match status" value="1"/>
</dbReference>
<dbReference type="FunFam" id="3.30.30.10:FF:000005">
    <property type="entry name" value="Defensin"/>
    <property type="match status" value="1"/>
</dbReference>
<dbReference type="Gene3D" id="3.30.30.10">
    <property type="entry name" value="Knottin, scorpion toxin-like"/>
    <property type="match status" value="1"/>
</dbReference>
<dbReference type="InterPro" id="IPR001542">
    <property type="entry name" value="Defensin_invertebrate/fungal"/>
</dbReference>
<dbReference type="InterPro" id="IPR036574">
    <property type="entry name" value="Scorpion_toxin-like_sf"/>
</dbReference>
<dbReference type="PANTHER" id="PTHR13645">
    <property type="entry name" value="DEFENSIN"/>
    <property type="match status" value="1"/>
</dbReference>
<dbReference type="PANTHER" id="PTHR13645:SF0">
    <property type="entry name" value="DEFENSIN"/>
    <property type="match status" value="1"/>
</dbReference>
<dbReference type="Pfam" id="PF01097">
    <property type="entry name" value="Defensin_2"/>
    <property type="match status" value="1"/>
</dbReference>
<dbReference type="SUPFAM" id="SSF57095">
    <property type="entry name" value="Scorpion toxin-like"/>
    <property type="match status" value="1"/>
</dbReference>
<dbReference type="PROSITE" id="PS51378">
    <property type="entry name" value="INVERT_DEFENSINS"/>
    <property type="match status" value="1"/>
</dbReference>
<comment type="function">
    <text evidence="3">Has antiparasitic activity against promastigote forms of L.major, and antibacterial activity against Gram-positive bacterium S.aureus. Has antifungal activity against the yeasts C.albicans and S.cerevisiae, but not C.glabrata. Has antifungal activity against filamentous fungi A.fumigatus, F.culmorum, F.oxysporum, N.crassa, T.viride and T.mentagrophytes, but not B.bassiana.</text>
</comment>
<comment type="subcellular location">
    <subcellularLocation>
        <location evidence="2 3">Secreted</location>
    </subcellularLocation>
</comment>
<comment type="tissue specificity">
    <text evidence="3">Is synthesized by the fat body and eventually secreted into the hemolymph.</text>
</comment>
<comment type="induction">
    <text evidence="3">By bacterial and parasitic hemolymph and gut infections. Expression peaks at 24 hours post infection by bacterium P.carotovorum, and at day four post infection by the parasite L.major.</text>
</comment>
<comment type="mass spectrometry" mass="4095.5" method="MALDI" evidence="3"/>
<comment type="similarity">
    <text evidence="2">Belongs to the invertebrate defensin family. Type 1 subfamily.</text>
</comment>
<evidence type="ECO:0000255" key="1"/>
<evidence type="ECO:0000255" key="2">
    <source>
        <dbReference type="PROSITE-ProRule" id="PRU00710"/>
    </source>
</evidence>
<evidence type="ECO:0000269" key="3">
    <source>
    </source>
</evidence>
<accession>P83404</accession>
<reference key="1">
    <citation type="journal article" date="2004" name="Infect. Immun.">
        <title>Characterization of a defensin from the sand fly Phlebotomus duboscqi induced by challenge with bacteria or the protozoan parasite Leishmania major.</title>
        <authorList>
            <person name="Boulanger N."/>
            <person name="Lowenberger C."/>
            <person name="Volf P."/>
            <person name="Ursic R."/>
            <person name="Sigutova L."/>
            <person name="Sabatier L."/>
            <person name="Svobodova M."/>
            <person name="Beverley S.M."/>
            <person name="Spaeth G."/>
            <person name="Brun R."/>
            <person name="Pesson B."/>
            <person name="Bulet P."/>
        </authorList>
    </citation>
    <scope>NUCLEOTIDE SEQUENCE [MRNA]</scope>
    <scope>PROTEIN SEQUENCE OF 59-98</scope>
    <scope>FUNCTION</scope>
    <scope>SUBCELLULAR LOCATION</scope>
    <scope>TISSUE SPECIFICITY</scope>
    <scope>INDUCTION</scope>
    <scope>MASS SPECTROMETRY</scope>
    <source>
        <strain>Senegal</strain>
        <tissue>Hemolymph</tissue>
    </source>
</reference>
<protein>
    <recommendedName>
        <fullName>Defensin</fullName>
    </recommendedName>
</protein>